<feature type="signal peptide" evidence="2">
    <location>
        <begin position="1"/>
        <end position="25"/>
    </location>
</feature>
<feature type="propeptide" id="PRO_0000274684">
    <location>
        <begin position="26"/>
        <end position="44"/>
    </location>
</feature>
<feature type="chain" id="PRO_0000274685" description="Potassium channel toxin TdiKIK">
    <location>
        <begin position="45"/>
        <end position="91"/>
    </location>
</feature>
<feature type="domain" description="BetaSPN-type CS-alpha/beta" evidence="3">
    <location>
        <begin position="58"/>
        <end position="91"/>
    </location>
</feature>
<feature type="disulfide bond" evidence="3">
    <location>
        <begin position="61"/>
        <end position="81"/>
    </location>
</feature>
<feature type="disulfide bond" evidence="3">
    <location>
        <begin position="68"/>
        <end position="86"/>
    </location>
</feature>
<feature type="disulfide bond" evidence="3">
    <location>
        <begin position="72"/>
        <end position="88"/>
    </location>
</feature>
<organism>
    <name type="scientific">Tityus discrepans</name>
    <name type="common">Venezuelan scorpion</name>
    <dbReference type="NCBI Taxonomy" id="57059"/>
    <lineage>
        <taxon>Eukaryota</taxon>
        <taxon>Metazoa</taxon>
        <taxon>Ecdysozoa</taxon>
        <taxon>Arthropoda</taxon>
        <taxon>Chelicerata</taxon>
        <taxon>Arachnida</taxon>
        <taxon>Scorpiones</taxon>
        <taxon>Buthida</taxon>
        <taxon>Buthoidea</taxon>
        <taxon>Buthidae</taxon>
        <taxon>Tityus</taxon>
    </lineage>
</organism>
<proteinExistence type="evidence at protein level"/>
<sequence length="91" mass="9960">MVATNRCCVFALLVALLLIHSLAEAGKGKEVLGKIKNKLVEVKEKIKAGWDKLTSKSEYACPVIDKFCEDHCAAKNAIGKCDDFKCQCLNS</sequence>
<evidence type="ECO:0000250" key="1">
    <source>
        <dbReference type="UniProtKB" id="Q0GY41"/>
    </source>
</evidence>
<evidence type="ECO:0000255" key="2"/>
<evidence type="ECO:0000255" key="3">
    <source>
        <dbReference type="PROSITE-ProRule" id="PRU01209"/>
    </source>
</evidence>
<evidence type="ECO:0000269" key="4">
    <source>
    </source>
</evidence>
<evidence type="ECO:0000303" key="5">
    <source>
    </source>
</evidence>
<evidence type="ECO:0000305" key="6"/>
<evidence type="ECO:0000305" key="7">
    <source>
    </source>
</evidence>
<evidence type="ECO:0000305" key="8">
    <source>
    </source>
</evidence>
<dbReference type="EMBL" id="DQ465348">
    <property type="protein sequence ID" value="ABE98264.1"/>
    <property type="molecule type" value="mRNA"/>
</dbReference>
<dbReference type="SMR" id="Q0GY43"/>
<dbReference type="GO" id="GO:0005576">
    <property type="term" value="C:extracellular region"/>
    <property type="evidence" value="ECO:0007669"/>
    <property type="project" value="UniProtKB-SubCell"/>
</dbReference>
<dbReference type="GO" id="GO:0015459">
    <property type="term" value="F:potassium channel regulator activity"/>
    <property type="evidence" value="ECO:0007669"/>
    <property type="project" value="UniProtKB-KW"/>
</dbReference>
<dbReference type="GO" id="GO:0090729">
    <property type="term" value="F:toxin activity"/>
    <property type="evidence" value="ECO:0007669"/>
    <property type="project" value="UniProtKB-KW"/>
</dbReference>
<dbReference type="GO" id="GO:0042742">
    <property type="term" value="P:defense response to bacterium"/>
    <property type="evidence" value="ECO:0007669"/>
    <property type="project" value="UniProtKB-KW"/>
</dbReference>
<dbReference type="InterPro" id="IPR029237">
    <property type="entry name" value="Long_scorpion_toxin_alpha/beta"/>
</dbReference>
<dbReference type="Pfam" id="PF14866">
    <property type="entry name" value="Scorpion_toxin_alpha-beta"/>
    <property type="match status" value="1"/>
</dbReference>
<dbReference type="PROSITE" id="PS51862">
    <property type="entry name" value="BSPN_CSAB"/>
    <property type="match status" value="1"/>
</dbReference>
<protein>
    <recommendedName>
        <fullName evidence="8">Potassium channel toxin TdiKIK</fullName>
        <shortName evidence="5">TdKIK</shortName>
    </recommendedName>
</protein>
<reference key="1">
    <citation type="journal article" date="2007" name="Peptides">
        <title>Wide phylogenetic distribution of scorpine and long-chain beta-KTx-like peptides in scorpion venoms: identification of 'orphan' components.</title>
        <authorList>
            <person name="Diego-Garcia E."/>
            <person name="Schwartz E.F."/>
            <person name="D'Suze G."/>
            <person name="Gonzalez S.A."/>
            <person name="Batista C.V."/>
            <person name="Garcia B.I."/>
            <person name="Rodriguez de la Vega R.C."/>
            <person name="Possani L.D."/>
        </authorList>
    </citation>
    <scope>NUCLEOTIDE SEQUENCE [MRNA]</scope>
    <source>
        <tissue>Venom gland</tissue>
    </source>
</reference>
<reference key="2">
    <citation type="journal article" date="2009" name="Biochimie">
        <title>Molecular cloning and nucleotide sequence analysis of genes from a cDNA library of the scorpion Tityus discrepans.</title>
        <authorList>
            <person name="D'Suze G."/>
            <person name="Schwartz E.F."/>
            <person name="Garcia-Gomez B.I."/>
            <person name="Sevcik C."/>
            <person name="Possani L.D."/>
        </authorList>
    </citation>
    <scope>NUCLEOTIDE SEQUENCE [MRNA]</scope>
    <source>
        <tissue>Venom gland</tissue>
    </source>
</reference>
<reference key="3">
    <citation type="journal article" date="2006" name="Proteomics">
        <title>Proteomic analysis of Tityus discrepans scorpion venom and amino acid sequence of novel toxins.</title>
        <authorList>
            <person name="Batista C.V.F."/>
            <person name="D'Suze G."/>
            <person name="Gomez-Lagunas F."/>
            <person name="Zamudio F.Z."/>
            <person name="Encarnacion S."/>
            <person name="Sevcik C."/>
            <person name="Possani L.D."/>
        </authorList>
    </citation>
    <scope>MASS SPECTROMETRY</scope>
    <scope>SUBCELLULAR LOCATION</scope>
    <source>
        <tissue>Venom</tissue>
    </source>
</reference>
<name>KIK2_TITDI</name>
<comment type="function">
    <text evidence="1">The full peptide presents antibacterial and cytotoxic activities. The synthetic C-terminus (AA 33-76) inhibits voltage-gated potassium channels Kv1.1/KCNA1, Kv1.2/KCNA2, and Kv1.3/KCNA3.</text>
</comment>
<comment type="subcellular location">
    <subcellularLocation>
        <location evidence="4">Secreted</location>
    </subcellularLocation>
</comment>
<comment type="tissue specificity">
    <text evidence="7">Expressed by the venom gland.</text>
</comment>
<comment type="mass spectrometry" mass="5221.0" method="Electrospray" evidence="4"/>
<comment type="similarity">
    <text evidence="6">Belongs to the long chain scorpion toxin family. Class 2 subfamily.</text>
</comment>
<keyword id="KW-0044">Antibiotic</keyword>
<keyword id="KW-0929">Antimicrobial</keyword>
<keyword id="KW-1015">Disulfide bond</keyword>
<keyword id="KW-0872">Ion channel impairing toxin</keyword>
<keyword id="KW-0528">Neurotoxin</keyword>
<keyword id="KW-0632">Potassium channel impairing toxin</keyword>
<keyword id="KW-0964">Secreted</keyword>
<keyword id="KW-0732">Signal</keyword>
<keyword id="KW-0800">Toxin</keyword>
<accession>Q0GY43</accession>